<gene>
    <name evidence="15" type="primary">SLC8B1</name>
    <name evidence="1" type="synonym">NCKX6</name>
    <name evidence="11" type="synonym">NCLX</name>
    <name evidence="15" type="synonym">SLC24A6</name>
</gene>
<keyword id="KW-0025">Alternative splicing</keyword>
<keyword id="KW-0050">Antiport</keyword>
<keyword id="KW-0106">Calcium</keyword>
<keyword id="KW-0109">Calcium transport</keyword>
<keyword id="KW-0325">Glycoprotein</keyword>
<keyword id="KW-0406">Ion transport</keyword>
<keyword id="KW-0452">Lithium</keyword>
<keyword id="KW-0472">Membrane</keyword>
<keyword id="KW-0496">Mitochondrion</keyword>
<keyword id="KW-0999">Mitochondrion inner membrane</keyword>
<keyword id="KW-0597">Phosphoprotein</keyword>
<keyword id="KW-1267">Proteomics identification</keyword>
<keyword id="KW-1185">Reference proteome</keyword>
<keyword id="KW-0716">Sensory transduction</keyword>
<keyword id="KW-0732">Signal</keyword>
<keyword id="KW-0915">Sodium</keyword>
<keyword id="KW-0739">Sodium transport</keyword>
<keyword id="KW-0812">Transmembrane</keyword>
<keyword id="KW-1133">Transmembrane helix</keyword>
<keyword id="KW-0813">Transport</keyword>
<sequence length="584" mass="64231">MAGRRLNLRWALSVLCVLLMAETVSGTRGSSTGAHISPQFPASGVNQTPVVDCRKVCGLNVSDRCDFIRTNPDCHSDGGYLDYLEGIFCHFPPSLLPLAVTLYVSWLLYLFLILGVTAAKFFCPNLSAISTTLKLSHNVAGVTFLAFGNGAPDIFSALVAFSDPHTAGLALGALFGAGVLVTTVVAGGITILHPFMAASRPFFRDIVFYMVAVFLTFLMLFRGRVTLAWALGYLGLYVFYVVTVILCTWIYQRQRRGSLFCPMPVTPEILSDSEEDRVSSNTNSYDYGDEYRPLFFYQETTAQILVRALNPLDYMKWRRKSAYWKALKVFKLPVEFLLLLTVPVVDPDKDDQNWKRPLNCLHLVISPLVVVLTLQSGTYGVYEIGGLVPVWVVVVIAGTALASVTFFATSDSQPPRLHWLFAFLGFLTSALWINAAATEVVNILRSLGVVFRLSNTVLGLTLLAWGNSIGDAFSDFTLARQGYPRMAFSACFGGIIFNILVGVGLGCLLQISRSHTEVKLEPDGLLVWVLAGALGLSLVFSLVSVPLQCFQLSRVYGFCLLLFYLNFLVVALLTEFGVIHLKSM</sequence>
<organism>
    <name type="scientific">Homo sapiens</name>
    <name type="common">Human</name>
    <dbReference type="NCBI Taxonomy" id="9606"/>
    <lineage>
        <taxon>Eukaryota</taxon>
        <taxon>Metazoa</taxon>
        <taxon>Chordata</taxon>
        <taxon>Craniata</taxon>
        <taxon>Vertebrata</taxon>
        <taxon>Euteleostomi</taxon>
        <taxon>Mammalia</taxon>
        <taxon>Eutheria</taxon>
        <taxon>Euarchontoglires</taxon>
        <taxon>Primates</taxon>
        <taxon>Haplorrhini</taxon>
        <taxon>Catarrhini</taxon>
        <taxon>Hominidae</taxon>
        <taxon>Homo</taxon>
    </lineage>
</organism>
<comment type="function">
    <text evidence="1 3 4 5 6 7 10">Mitochondrial sodium/calcium antiporter that mediates sodium-dependent calcium efflux from mitochondrion, by mediating the exchange of 3 sodium ions per 1 calcium ion (PubMed:15060069, PubMed:20018762, PubMed:22829870, PubMed:23056385, PubMed:24898248, PubMed:28130126, PubMed:28219928). Plays a central role in mitochondrial calcium homeostasis by mediating mitochondrial calcium extrusion: calcium efflux is essential for mitochondrial function and cell survival, notably in cardiomyocytes (By similarity). Regulates rates of glucose-dependent insulin secretion in pancreatic beta-cells during the first phase of insulin secretion: acts by mediating efflux of calcium from mitochondrion, thereby affecting cytoplasmic calcium responses (PubMed:23056385). Required for store-operated Ca(2+) entry (SOCE) and Ca(2+) release-activated Ca(2+) (CRAC) channel regulation: sodium transport by SLC8B1 leads to promote calcium-shuttling that modulates mitochondrial redox status, thereby regulating SOCE activity (PubMed:28219928). Involved in B-lymphocyte chemotaxis (By similarity). Able to transport Ca(2+) in exchange of either Li(+) or Na(+), explaining how Li(+) catalyzes Ca(2+) exchange (PubMed:15060069, PubMed:28130126). In contrast to other members of the family its function is independent of K(+) (PubMed:15060069).</text>
</comment>
<comment type="catalytic activity">
    <molecule>Isoform 1</molecule>
    <reaction evidence="3 9 13 14">
        <text>Ca(2+)(in) + 3 Na(+)(out) = Ca(2+)(out) + 3 Na(+)(in)</text>
        <dbReference type="Rhea" id="RHEA:69955"/>
        <dbReference type="ChEBI" id="CHEBI:29101"/>
        <dbReference type="ChEBI" id="CHEBI:29108"/>
    </reaction>
</comment>
<comment type="catalytic activity">
    <molecule>Isoform 2</molecule>
    <reaction evidence="3">
        <text>Ca(2+)(in) + 3 Na(+)(out) = Ca(2+)(out) + 3 Na(+)(in)</text>
        <dbReference type="Rhea" id="RHEA:69955"/>
        <dbReference type="ChEBI" id="CHEBI:29101"/>
        <dbReference type="ChEBI" id="CHEBI:29108"/>
    </reaction>
</comment>
<comment type="catalytic activity">
    <molecule>Isoform 1</molecule>
    <reaction evidence="3 9">
        <text>3 Li(+)(out) + Ca(2+)(in) = 3 Li(+)(in) + Ca(2+)(out)</text>
        <dbReference type="Rhea" id="RHEA:72631"/>
        <dbReference type="ChEBI" id="CHEBI:29108"/>
        <dbReference type="ChEBI" id="CHEBI:49713"/>
    </reaction>
</comment>
<comment type="catalytic activity">
    <molecule>Isoform 2</molecule>
    <reaction evidence="3">
        <text>3 Li(+)(out) + Ca(2+)(in) = 3 Li(+)(in) + Ca(2+)(out)</text>
        <dbReference type="Rhea" id="RHEA:72631"/>
        <dbReference type="ChEBI" id="CHEBI:29108"/>
        <dbReference type="ChEBI" id="CHEBI:49713"/>
    </reaction>
</comment>
<comment type="activity regulation">
    <text evidence="3 7">Inhibited by the sodium/calcium exchanger inhibitor CGP-37157 (PubMed:24898248). Strongly inhibited by zinc (PubMed:15060069).</text>
</comment>
<comment type="subcellular location">
    <subcellularLocation>
        <location evidence="4 6">Mitochondrion inner membrane</location>
        <topology evidence="4 6">Multi-pass membrane protein</topology>
    </subcellularLocation>
</comment>
<comment type="alternative products">
    <event type="alternative splicing"/>
    <isoform>
        <id>Q6J4K2-1</id>
        <name>1</name>
        <sequence type="displayed"/>
    </isoform>
    <isoform>
        <id>Q6J4K2-2</id>
        <name>2</name>
        <name evidence="11">S-NCLX</name>
        <sequence type="described" ref="VSP_016996"/>
    </isoform>
</comment>
<comment type="tissue specificity">
    <text evidence="6">Present in pancreatic beta-cells (at protein level).</text>
</comment>
<comment type="PTM">
    <text evidence="8">Phosphorylation at Ser-258 by PKA prevents calcium overload.</text>
</comment>
<comment type="similarity">
    <text evidence="12">Belongs to the Ca(2+):cation antiporter (CaCA) (TC 2.A.19) family. SLC24A subfamily.</text>
</comment>
<comment type="sequence caution" evidence="12">
    <conflict type="erroneous initiation">
        <sequence resource="EMBL-CDS" id="BAB15271"/>
    </conflict>
    <text>Truncated N-terminus.</text>
</comment>
<name>NCLX_HUMAN</name>
<evidence type="ECO:0000250" key="1">
    <source>
        <dbReference type="UniProtKB" id="Q925Q3"/>
    </source>
</evidence>
<evidence type="ECO:0000255" key="2"/>
<evidence type="ECO:0000269" key="3">
    <source>
    </source>
</evidence>
<evidence type="ECO:0000269" key="4">
    <source>
    </source>
</evidence>
<evidence type="ECO:0000269" key="5">
    <source>
    </source>
</evidence>
<evidence type="ECO:0000269" key="6">
    <source>
    </source>
</evidence>
<evidence type="ECO:0000269" key="7">
    <source>
    </source>
</evidence>
<evidence type="ECO:0000269" key="8">
    <source>
    </source>
</evidence>
<evidence type="ECO:0000269" key="9">
    <source>
    </source>
</evidence>
<evidence type="ECO:0000269" key="10">
    <source>
    </source>
</evidence>
<evidence type="ECO:0000303" key="11">
    <source>
    </source>
</evidence>
<evidence type="ECO:0000305" key="12"/>
<evidence type="ECO:0000305" key="13">
    <source>
    </source>
</evidence>
<evidence type="ECO:0000305" key="14">
    <source>
    </source>
</evidence>
<evidence type="ECO:0000312" key="15">
    <source>
        <dbReference type="HGNC" id="HGNC:26175"/>
    </source>
</evidence>
<feature type="signal peptide" evidence="2">
    <location>
        <begin position="1"/>
        <end position="26"/>
    </location>
</feature>
<feature type="chain" id="PRO_0000045756" description="Mitochondrial sodium/calcium exchanger protein">
    <location>
        <begin position="27"/>
        <end position="584"/>
    </location>
</feature>
<feature type="topological domain" description="Extracellular" evidence="2">
    <location>
        <begin position="27"/>
        <end position="95"/>
    </location>
</feature>
<feature type="transmembrane region" description="Helical; Name=1" evidence="2">
    <location>
        <begin position="96"/>
        <end position="116"/>
    </location>
</feature>
<feature type="topological domain" description="Cytoplasmic" evidence="2">
    <location>
        <begin position="117"/>
        <end position="140"/>
    </location>
</feature>
<feature type="transmembrane region" description="Helical; Name=2" evidence="2">
    <location>
        <begin position="141"/>
        <end position="161"/>
    </location>
</feature>
<feature type="topological domain" description="Extracellular" evidence="2">
    <location>
        <begin position="162"/>
        <end position="168"/>
    </location>
</feature>
<feature type="transmembrane region" description="Helical; Name=3" evidence="2">
    <location>
        <begin position="169"/>
        <end position="189"/>
    </location>
</feature>
<feature type="topological domain" description="Cytoplasmic" evidence="2">
    <location>
        <begin position="190"/>
        <end position="200"/>
    </location>
</feature>
<feature type="transmembrane region" description="Helical; Name=4" evidence="2">
    <location>
        <begin position="201"/>
        <end position="221"/>
    </location>
</feature>
<feature type="topological domain" description="Extracellular" evidence="2">
    <location>
        <begin position="222"/>
        <end position="226"/>
    </location>
</feature>
<feature type="transmembrane region" description="Helical; Name=5" evidence="2">
    <location>
        <begin position="227"/>
        <end position="247"/>
    </location>
</feature>
<feature type="topological domain" description="Cytoplasmic" evidence="2">
    <location>
        <begin position="248"/>
        <end position="325"/>
    </location>
</feature>
<feature type="transmembrane region" description="Helical; Name=6" evidence="2">
    <location>
        <begin position="326"/>
        <end position="346"/>
    </location>
</feature>
<feature type="topological domain" description="Extracellular" evidence="2">
    <location>
        <begin position="347"/>
        <end position="360"/>
    </location>
</feature>
<feature type="transmembrane region" description="Helical; Name=7" evidence="2">
    <location>
        <begin position="361"/>
        <end position="381"/>
    </location>
</feature>
<feature type="topological domain" description="Cytoplasmic" evidence="2">
    <location>
        <begin position="382"/>
        <end position="383"/>
    </location>
</feature>
<feature type="transmembrane region" description="Helical; Name=8" evidence="2">
    <location>
        <begin position="384"/>
        <end position="404"/>
    </location>
</feature>
<feature type="topological domain" description="Extracellular" evidence="2">
    <location>
        <begin position="405"/>
        <end position="416"/>
    </location>
</feature>
<feature type="transmembrane region" description="Helical; Name=9" evidence="2">
    <location>
        <begin position="417"/>
        <end position="437"/>
    </location>
</feature>
<feature type="topological domain" description="Cytoplasmic" evidence="2">
    <location>
        <begin position="438"/>
        <end position="445"/>
    </location>
</feature>
<feature type="transmembrane region" description="Helical; Name=10" evidence="2">
    <location>
        <begin position="446"/>
        <end position="466"/>
    </location>
</feature>
<feature type="topological domain" description="Extracellular" evidence="2">
    <location>
        <begin position="467"/>
        <end position="487"/>
    </location>
</feature>
<feature type="transmembrane region" description="Helical; Name=11" evidence="2">
    <location>
        <begin position="488"/>
        <end position="508"/>
    </location>
</feature>
<feature type="topological domain" description="Cytoplasmic" evidence="2">
    <location>
        <begin position="509"/>
        <end position="524"/>
    </location>
</feature>
<feature type="transmembrane region" description="Helical; Name=12" evidence="2">
    <location>
        <begin position="525"/>
        <end position="545"/>
    </location>
</feature>
<feature type="topological domain" description="Extracellular" evidence="2">
    <location>
        <begin position="546"/>
        <end position="558"/>
    </location>
</feature>
<feature type="transmembrane region" description="Helical; Name=13" evidence="2">
    <location>
        <begin position="559"/>
        <end position="579"/>
    </location>
</feature>
<feature type="topological domain" description="Cytoplasmic" evidence="2">
    <location>
        <begin position="580"/>
        <end position="584"/>
    </location>
</feature>
<feature type="modified residue" description="Phosphoserine; by PKA" evidence="8">
    <location>
        <position position="258"/>
    </location>
</feature>
<feature type="glycosylation site" description="N-linked (GlcNAc...) asparagine" evidence="2">
    <location>
        <position position="60"/>
    </location>
</feature>
<feature type="splice variant" id="VSP_016996" description="In isoform 2." evidence="11">
    <location>
        <begin position="176"/>
        <end position="231"/>
    </location>
</feature>
<feature type="sequence variant" id="VAR_050224" description="In dbSNP:rs16942745.">
    <original>R</original>
    <variation>C</variation>
    <location>
        <position position="222"/>
    </location>
</feature>
<feature type="sequence variant" id="VAR_050225" description="In dbSNP:rs3764034.">
    <original>L</original>
    <variation>F</variation>
    <location>
        <position position="358"/>
    </location>
</feature>
<feature type="mutagenesis site" description="Lithium-selective; displays reduced calcium:sodium antiporter activity while retaining almost normal calcium:lithium antiporter activity." evidence="9">
    <original>N</original>
    <variation>A</variation>
    <location>
        <position position="149"/>
    </location>
</feature>
<feature type="mutagenesis site" description="Lithium-selective; displays markedly reduced calcium:sodium antiporter activity while retaining almost normal calcium:lithium antiporter activity." evidence="9">
    <original>P</original>
    <variation>A</variation>
    <location>
        <position position="152"/>
    </location>
</feature>
<feature type="mutagenesis site" description="Lithium-selective; displays markedly reduced calcium:sodium antiporter activity while retaining almost normal calcium:lithium antiporter activity." evidence="9">
    <original>D</original>
    <variation>A</variation>
    <location>
        <position position="153"/>
    </location>
</feature>
<feature type="mutagenesis site" description="Non-selective; displays similar reduction of calcium:sodium and calcium:lithium antiporter activities." evidence="9">
    <original>G</original>
    <variation>A</variation>
    <location>
        <position position="176"/>
    </location>
</feature>
<feature type="mutagenesis site" description="Abolished ability to prevent calcium overload." evidence="8">
    <original>S</original>
    <variation>A</variation>
    <location>
        <position position="258"/>
    </location>
</feature>
<feature type="mutagenesis site" description="Phosphomimetic mutant; prevents calcium overload." evidence="8">
    <original>S</original>
    <variation>D</variation>
    <location>
        <position position="258"/>
    </location>
</feature>
<feature type="mutagenesis site" description="Has no effect on calcium:sodium antiporter activity." evidence="9">
    <original>N</original>
    <variation>A</variation>
    <location>
        <position position="467"/>
    </location>
</feature>
<feature type="mutagenesis site" description="Lithium-selective; displays markedly reduced calcium:sodium antiporter activity while retaining normal calcium:lithium antiporter activity." evidence="9">
    <original>N</original>
    <variation>Q</variation>
    <location>
        <position position="467"/>
    </location>
</feature>
<feature type="mutagenesis site" description="Lithium-selective; displays markedly reduced calcium:sodium antiporter activity while retaining almost normal calcium:lithium antiporter activity." evidence="9">
    <original>S</original>
    <variation>T</variation>
    <location>
        <position position="468"/>
    </location>
</feature>
<feature type="mutagenesis site" description="Sodium-selective; has little effect on calcium:sodium antiporter activity while displaying markedly reduced calcium:lithium antiporter activity." evidence="9">
    <original>D</original>
    <variation>A</variation>
    <location>
        <position position="471"/>
    </location>
</feature>
<feature type="mutagenesis site" description="Non-selective; displays reduction of both calcium:sodium and calcium:lithium antiporter activities." evidence="9">
    <original>D</original>
    <variation>E</variation>
    <location>
        <position position="471"/>
    </location>
</feature>
<feature type="mutagenesis site" description="Lithium-selective; displays markedly reduced calcium:sodium antiporter activity while retaining almost normal calcium:lithium antiporter activity." evidence="9">
    <original>G</original>
    <variation>S</variation>
    <location>
        <position position="494"/>
    </location>
</feature>
<feature type="mutagenesis site" description="Non-selective; displays similar reduction of calcium:sodium and calcium:lithium antiporter activities." evidence="9">
    <original>N</original>
    <variation>A</variation>
    <location>
        <position position="498"/>
    </location>
</feature>
<feature type="sequence conflict" description="In Ref. 1; AAT35807." evidence="12" ref="1">
    <original>C</original>
    <variation>R</variation>
    <location>
        <position position="57"/>
    </location>
</feature>
<feature type="sequence conflict" description="In Ref. 1; AAT35807." evidence="12" ref="1">
    <original>S</original>
    <variation>P</variation>
    <location>
        <position position="130"/>
    </location>
</feature>
<feature type="sequence conflict" description="In Ref. 1; AAT35807." evidence="12" ref="1">
    <original>N</original>
    <variation>S</variation>
    <location>
        <position position="281"/>
    </location>
</feature>
<reference key="1">
    <citation type="journal article" date="2004" name="J. Biol. Chem.">
        <title>Lithium-calcium exchange is mediated by a distinct potassium-independent sodium-calcium exchanger.</title>
        <authorList>
            <person name="Palty R."/>
            <person name="Ohana E."/>
            <person name="Hershfinkel M."/>
            <person name="Volokita M."/>
            <person name="Elgazar V."/>
            <person name="Beharier O."/>
            <person name="Silverman W.F."/>
            <person name="Argaman M."/>
            <person name="Sekler I."/>
        </authorList>
    </citation>
    <scope>NUCLEOTIDE SEQUENCE [MRNA] (ISOFORMS 1 AND 2)</scope>
    <scope>FUNCTION</scope>
    <scope>TRANSPORTER ACTIVITY (ISOFORMS 1 AND 2)</scope>
    <scope>ACTIVITY REGULATION</scope>
</reference>
<reference key="2">
    <citation type="journal article" date="2006" name="Nature">
        <title>The finished DNA sequence of human chromosome 12.</title>
        <authorList>
            <person name="Scherer S.E."/>
            <person name="Muzny D.M."/>
            <person name="Buhay C.J."/>
            <person name="Chen R."/>
            <person name="Cree A."/>
            <person name="Ding Y."/>
            <person name="Dugan-Rocha S."/>
            <person name="Gill R."/>
            <person name="Gunaratne P."/>
            <person name="Harris R.A."/>
            <person name="Hawes A.C."/>
            <person name="Hernandez J."/>
            <person name="Hodgson A.V."/>
            <person name="Hume J."/>
            <person name="Jackson A."/>
            <person name="Khan Z.M."/>
            <person name="Kovar-Smith C."/>
            <person name="Lewis L.R."/>
            <person name="Lozado R.J."/>
            <person name="Metzker M.L."/>
            <person name="Milosavljevic A."/>
            <person name="Miner G.R."/>
            <person name="Montgomery K.T."/>
            <person name="Morgan M.B."/>
            <person name="Nazareth L.V."/>
            <person name="Scott G."/>
            <person name="Sodergren E."/>
            <person name="Song X.-Z."/>
            <person name="Steffen D."/>
            <person name="Lovering R.C."/>
            <person name="Wheeler D.A."/>
            <person name="Worley K.C."/>
            <person name="Yuan Y."/>
            <person name="Zhang Z."/>
            <person name="Adams C.Q."/>
            <person name="Ansari-Lari M.A."/>
            <person name="Ayele M."/>
            <person name="Brown M.J."/>
            <person name="Chen G."/>
            <person name="Chen Z."/>
            <person name="Clerc-Blankenburg K.P."/>
            <person name="Davis C."/>
            <person name="Delgado O."/>
            <person name="Dinh H.H."/>
            <person name="Draper H."/>
            <person name="Gonzalez-Garay M.L."/>
            <person name="Havlak P."/>
            <person name="Jackson L.R."/>
            <person name="Jacob L.S."/>
            <person name="Kelly S.H."/>
            <person name="Li L."/>
            <person name="Li Z."/>
            <person name="Liu J."/>
            <person name="Liu W."/>
            <person name="Lu J."/>
            <person name="Maheshwari M."/>
            <person name="Nguyen B.-V."/>
            <person name="Okwuonu G.O."/>
            <person name="Pasternak S."/>
            <person name="Perez L.M."/>
            <person name="Plopper F.J.H."/>
            <person name="Santibanez J."/>
            <person name="Shen H."/>
            <person name="Tabor P.E."/>
            <person name="Verduzco D."/>
            <person name="Waldron L."/>
            <person name="Wang Q."/>
            <person name="Williams G.A."/>
            <person name="Zhang J."/>
            <person name="Zhou J."/>
            <person name="Allen C.C."/>
            <person name="Amin A.G."/>
            <person name="Anyalebechi V."/>
            <person name="Bailey M."/>
            <person name="Barbaria J.A."/>
            <person name="Bimage K.E."/>
            <person name="Bryant N.P."/>
            <person name="Burch P.E."/>
            <person name="Burkett C.E."/>
            <person name="Burrell K.L."/>
            <person name="Calderon E."/>
            <person name="Cardenas V."/>
            <person name="Carter K."/>
            <person name="Casias K."/>
            <person name="Cavazos I."/>
            <person name="Cavazos S.R."/>
            <person name="Ceasar H."/>
            <person name="Chacko J."/>
            <person name="Chan S.N."/>
            <person name="Chavez D."/>
            <person name="Christopoulos C."/>
            <person name="Chu J."/>
            <person name="Cockrell R."/>
            <person name="Cox C.D."/>
            <person name="Dang M."/>
            <person name="Dathorne S.R."/>
            <person name="David R."/>
            <person name="Davis C.M."/>
            <person name="Davy-Carroll L."/>
            <person name="Deshazo D.R."/>
            <person name="Donlin J.E."/>
            <person name="D'Souza L."/>
            <person name="Eaves K.A."/>
            <person name="Egan A."/>
            <person name="Emery-Cohen A.J."/>
            <person name="Escotto M."/>
            <person name="Flagg N."/>
            <person name="Forbes L.D."/>
            <person name="Gabisi A.M."/>
            <person name="Garza M."/>
            <person name="Hamilton C."/>
            <person name="Henderson N."/>
            <person name="Hernandez O."/>
            <person name="Hines S."/>
            <person name="Hogues M.E."/>
            <person name="Huang M."/>
            <person name="Idlebird D.G."/>
            <person name="Johnson R."/>
            <person name="Jolivet A."/>
            <person name="Jones S."/>
            <person name="Kagan R."/>
            <person name="King L.M."/>
            <person name="Leal B."/>
            <person name="Lebow H."/>
            <person name="Lee S."/>
            <person name="LeVan J.M."/>
            <person name="Lewis L.C."/>
            <person name="London P."/>
            <person name="Lorensuhewa L.M."/>
            <person name="Loulseged H."/>
            <person name="Lovett D.A."/>
            <person name="Lucier A."/>
            <person name="Lucier R.L."/>
            <person name="Ma J."/>
            <person name="Madu R.C."/>
            <person name="Mapua P."/>
            <person name="Martindale A.D."/>
            <person name="Martinez E."/>
            <person name="Massey E."/>
            <person name="Mawhiney S."/>
            <person name="Meador M.G."/>
            <person name="Mendez S."/>
            <person name="Mercado C."/>
            <person name="Mercado I.C."/>
            <person name="Merritt C.E."/>
            <person name="Miner Z.L."/>
            <person name="Minja E."/>
            <person name="Mitchell T."/>
            <person name="Mohabbat F."/>
            <person name="Mohabbat K."/>
            <person name="Montgomery B."/>
            <person name="Moore N."/>
            <person name="Morris S."/>
            <person name="Munidasa M."/>
            <person name="Ngo R.N."/>
            <person name="Nguyen N.B."/>
            <person name="Nickerson E."/>
            <person name="Nwaokelemeh O.O."/>
            <person name="Nwokenkwo S."/>
            <person name="Obregon M."/>
            <person name="Oguh M."/>
            <person name="Oragunye N."/>
            <person name="Oviedo R.J."/>
            <person name="Parish B.J."/>
            <person name="Parker D.N."/>
            <person name="Parrish J."/>
            <person name="Parks K.L."/>
            <person name="Paul H.A."/>
            <person name="Payton B.A."/>
            <person name="Perez A."/>
            <person name="Perrin W."/>
            <person name="Pickens A."/>
            <person name="Primus E.L."/>
            <person name="Pu L.-L."/>
            <person name="Puazo M."/>
            <person name="Quiles M.M."/>
            <person name="Quiroz J.B."/>
            <person name="Rabata D."/>
            <person name="Reeves K."/>
            <person name="Ruiz S.J."/>
            <person name="Shao H."/>
            <person name="Sisson I."/>
            <person name="Sonaike T."/>
            <person name="Sorelle R.P."/>
            <person name="Sutton A.E."/>
            <person name="Svatek A.F."/>
            <person name="Svetz L.A."/>
            <person name="Tamerisa K.S."/>
            <person name="Taylor T.R."/>
            <person name="Teague B."/>
            <person name="Thomas N."/>
            <person name="Thorn R.D."/>
            <person name="Trejos Z.Y."/>
            <person name="Trevino B.K."/>
            <person name="Ukegbu O.N."/>
            <person name="Urban J.B."/>
            <person name="Vasquez L.I."/>
            <person name="Vera V.A."/>
            <person name="Villasana D.M."/>
            <person name="Wang L."/>
            <person name="Ward-Moore S."/>
            <person name="Warren J.T."/>
            <person name="Wei X."/>
            <person name="White F."/>
            <person name="Williamson A.L."/>
            <person name="Wleczyk R."/>
            <person name="Wooden H.S."/>
            <person name="Wooden S.H."/>
            <person name="Yen J."/>
            <person name="Yoon L."/>
            <person name="Yoon V."/>
            <person name="Zorrilla S.E."/>
            <person name="Nelson D."/>
            <person name="Kucherlapati R."/>
            <person name="Weinstock G."/>
            <person name="Gibbs R.A."/>
        </authorList>
    </citation>
    <scope>NUCLEOTIDE SEQUENCE [LARGE SCALE GENOMIC DNA]</scope>
</reference>
<reference key="3">
    <citation type="submission" date="2005-07" db="EMBL/GenBank/DDBJ databases">
        <authorList>
            <person name="Mural R.J."/>
            <person name="Istrail S."/>
            <person name="Sutton G.G."/>
            <person name="Florea L."/>
            <person name="Halpern A.L."/>
            <person name="Mobarry C.M."/>
            <person name="Lippert R."/>
            <person name="Walenz B."/>
            <person name="Shatkay H."/>
            <person name="Dew I."/>
            <person name="Miller J.R."/>
            <person name="Flanigan M.J."/>
            <person name="Edwards N.J."/>
            <person name="Bolanos R."/>
            <person name="Fasulo D."/>
            <person name="Halldorsson B.V."/>
            <person name="Hannenhalli S."/>
            <person name="Turner R."/>
            <person name="Yooseph S."/>
            <person name="Lu F."/>
            <person name="Nusskern D.R."/>
            <person name="Shue B.C."/>
            <person name="Zheng X.H."/>
            <person name="Zhong F."/>
            <person name="Delcher A.L."/>
            <person name="Huson D.H."/>
            <person name="Kravitz S.A."/>
            <person name="Mouchard L."/>
            <person name="Reinert K."/>
            <person name="Remington K.A."/>
            <person name="Clark A.G."/>
            <person name="Waterman M.S."/>
            <person name="Eichler E.E."/>
            <person name="Adams M.D."/>
            <person name="Hunkapiller M.W."/>
            <person name="Myers E.W."/>
            <person name="Venter J.C."/>
        </authorList>
    </citation>
    <scope>NUCLEOTIDE SEQUENCE [LARGE SCALE GENOMIC DNA]</scope>
</reference>
<reference key="4">
    <citation type="journal article" date="2004" name="Genome Res.">
        <title>The status, quality, and expansion of the NIH full-length cDNA project: the Mammalian Gene Collection (MGC).</title>
        <authorList>
            <consortium name="The MGC Project Team"/>
        </authorList>
    </citation>
    <scope>NUCLEOTIDE SEQUENCE [LARGE SCALE MRNA] (ISOFORM 1)</scope>
</reference>
<reference key="5">
    <citation type="journal article" date="2004" name="Nat. Genet.">
        <title>Complete sequencing and characterization of 21,243 full-length human cDNAs.</title>
        <authorList>
            <person name="Ota T."/>
            <person name="Suzuki Y."/>
            <person name="Nishikawa T."/>
            <person name="Otsuki T."/>
            <person name="Sugiyama T."/>
            <person name="Irie R."/>
            <person name="Wakamatsu A."/>
            <person name="Hayashi K."/>
            <person name="Sato H."/>
            <person name="Nagai K."/>
            <person name="Kimura K."/>
            <person name="Makita H."/>
            <person name="Sekine M."/>
            <person name="Obayashi M."/>
            <person name="Nishi T."/>
            <person name="Shibahara T."/>
            <person name="Tanaka T."/>
            <person name="Ishii S."/>
            <person name="Yamamoto J."/>
            <person name="Saito K."/>
            <person name="Kawai Y."/>
            <person name="Isono Y."/>
            <person name="Nakamura Y."/>
            <person name="Nagahari K."/>
            <person name="Murakami K."/>
            <person name="Yasuda T."/>
            <person name="Iwayanagi T."/>
            <person name="Wagatsuma M."/>
            <person name="Shiratori A."/>
            <person name="Sudo H."/>
            <person name="Hosoiri T."/>
            <person name="Kaku Y."/>
            <person name="Kodaira H."/>
            <person name="Kondo H."/>
            <person name="Sugawara M."/>
            <person name="Takahashi M."/>
            <person name="Kanda K."/>
            <person name="Yokoi T."/>
            <person name="Furuya T."/>
            <person name="Kikkawa E."/>
            <person name="Omura Y."/>
            <person name="Abe K."/>
            <person name="Kamihara K."/>
            <person name="Katsuta N."/>
            <person name="Sato K."/>
            <person name="Tanikawa M."/>
            <person name="Yamazaki M."/>
            <person name="Ninomiya K."/>
            <person name="Ishibashi T."/>
            <person name="Yamashita H."/>
            <person name="Murakawa K."/>
            <person name="Fujimori K."/>
            <person name="Tanai H."/>
            <person name="Kimata M."/>
            <person name="Watanabe M."/>
            <person name="Hiraoka S."/>
            <person name="Chiba Y."/>
            <person name="Ishida S."/>
            <person name="Ono Y."/>
            <person name="Takiguchi S."/>
            <person name="Watanabe S."/>
            <person name="Yosida M."/>
            <person name="Hotuta T."/>
            <person name="Kusano J."/>
            <person name="Kanehori K."/>
            <person name="Takahashi-Fujii A."/>
            <person name="Hara H."/>
            <person name="Tanase T.-O."/>
            <person name="Nomura Y."/>
            <person name="Togiya S."/>
            <person name="Komai F."/>
            <person name="Hara R."/>
            <person name="Takeuchi K."/>
            <person name="Arita M."/>
            <person name="Imose N."/>
            <person name="Musashino K."/>
            <person name="Yuuki H."/>
            <person name="Oshima A."/>
            <person name="Sasaki N."/>
            <person name="Aotsuka S."/>
            <person name="Yoshikawa Y."/>
            <person name="Matsunawa H."/>
            <person name="Ichihara T."/>
            <person name="Shiohata N."/>
            <person name="Sano S."/>
            <person name="Moriya S."/>
            <person name="Momiyama H."/>
            <person name="Satoh N."/>
            <person name="Takami S."/>
            <person name="Terashima Y."/>
            <person name="Suzuki O."/>
            <person name="Nakagawa S."/>
            <person name="Senoh A."/>
            <person name="Mizoguchi H."/>
            <person name="Goto Y."/>
            <person name="Shimizu F."/>
            <person name="Wakebe H."/>
            <person name="Hishigaki H."/>
            <person name="Watanabe T."/>
            <person name="Sugiyama A."/>
            <person name="Takemoto M."/>
            <person name="Kawakami B."/>
            <person name="Yamazaki M."/>
            <person name="Watanabe K."/>
            <person name="Kumagai A."/>
            <person name="Itakura S."/>
            <person name="Fukuzumi Y."/>
            <person name="Fujimori Y."/>
            <person name="Komiyama M."/>
            <person name="Tashiro H."/>
            <person name="Tanigami A."/>
            <person name="Fujiwara T."/>
            <person name="Ono T."/>
            <person name="Yamada K."/>
            <person name="Fujii Y."/>
            <person name="Ozaki K."/>
            <person name="Hirao M."/>
            <person name="Ohmori Y."/>
            <person name="Kawabata A."/>
            <person name="Hikiji T."/>
            <person name="Kobatake N."/>
            <person name="Inagaki H."/>
            <person name="Ikema Y."/>
            <person name="Okamoto S."/>
            <person name="Okitani R."/>
            <person name="Kawakami T."/>
            <person name="Noguchi S."/>
            <person name="Itoh T."/>
            <person name="Shigeta K."/>
            <person name="Senba T."/>
            <person name="Matsumura K."/>
            <person name="Nakajima Y."/>
            <person name="Mizuno T."/>
            <person name="Morinaga M."/>
            <person name="Sasaki M."/>
            <person name="Togashi T."/>
            <person name="Oyama M."/>
            <person name="Hata H."/>
            <person name="Watanabe M."/>
            <person name="Komatsu T."/>
            <person name="Mizushima-Sugano J."/>
            <person name="Satoh T."/>
            <person name="Shirai Y."/>
            <person name="Takahashi Y."/>
            <person name="Nakagawa K."/>
            <person name="Okumura K."/>
            <person name="Nagase T."/>
            <person name="Nomura N."/>
            <person name="Kikuchi H."/>
            <person name="Masuho Y."/>
            <person name="Yamashita R."/>
            <person name="Nakai K."/>
            <person name="Yada T."/>
            <person name="Nakamura Y."/>
            <person name="Ohara O."/>
            <person name="Isogai T."/>
            <person name="Sugano S."/>
        </authorList>
    </citation>
    <scope>NUCLEOTIDE SEQUENCE [LARGE SCALE MRNA] OF 185-584 (ISOFORM 1)</scope>
</reference>
<reference key="6">
    <citation type="journal article" date="2010" name="Proc. Natl. Acad. Sci. U.S.A.">
        <title>NCLX is an essential component of mitochondrial Na+/Ca2+ exchange.</title>
        <authorList>
            <person name="Palty R."/>
            <person name="Silverman W.F."/>
            <person name="Hershfinkel M."/>
            <person name="Caporale T."/>
            <person name="Sensi S.L."/>
            <person name="Parnis J."/>
            <person name="Nolte C."/>
            <person name="Fishman D."/>
            <person name="Shoshan-Barmatz V."/>
            <person name="Herrmann S."/>
            <person name="Khananshvili D."/>
            <person name="Sekler I."/>
        </authorList>
    </citation>
    <scope>FUNCTION</scope>
    <scope>SUBCELLULAR LOCATION</scope>
</reference>
<reference key="7">
    <citation type="journal article" date="2012" name="PLoS ONE">
        <title>The mitochondrial Ca2+ uniporter MCU is essential for glucose-induced ATP increases in pancreatic beta-cells.</title>
        <authorList>
            <person name="Tarasov A.I."/>
            <person name="Semplici F."/>
            <person name="Ravier M.A."/>
            <person name="Bellomo E.A."/>
            <person name="Pullen T.J."/>
            <person name="Gilon P."/>
            <person name="Sekler I."/>
            <person name="Rizzuto R."/>
            <person name="Rutter G.A."/>
        </authorList>
    </citation>
    <scope>FUNCTION</scope>
</reference>
<reference key="8">
    <citation type="journal article" date="2012" name="PLoS ONE">
        <title>The mitochondrial na(+)/ca(2+) exchanger upregulates glucose dependent ca(2+) signalling linked to insulin secretion.</title>
        <authorList>
            <person name="Nita I.I."/>
            <person name="Hershfinkel M."/>
            <person name="Fishman D."/>
            <person name="Ozeri E."/>
            <person name="Rutter G.A."/>
            <person name="Sensi S.L."/>
            <person name="Khananshvili D."/>
            <person name="Lewis E.C."/>
            <person name="Sekler I."/>
        </authorList>
    </citation>
    <scope>FUNCTION</scope>
    <scope>TRANSPORTER ACTIVITY</scope>
    <scope>SUBCELLULAR LOCATION</scope>
    <scope>TISSUE SPECIFICITY</scope>
</reference>
<reference key="9">
    <citation type="journal article" date="2014" name="J. Biol. Chem.">
        <title>NCLX protein, but not LETM1, mediates mitochondrial Ca2+ extrusion, thereby limiting Ca2+-induced NAD(P)H production and modulating matrix redox state.</title>
        <authorList>
            <person name="De Marchi U."/>
            <person name="Santo-Domingo J."/>
            <person name="Castelbou C."/>
            <person name="Sekler I."/>
            <person name="Wiederkehr A."/>
            <person name="Demaurex N."/>
        </authorList>
    </citation>
    <scope>FUNCTION</scope>
    <scope>TRANSPORTER ACTIVITY</scope>
    <scope>ACTIVITY REGULATION</scope>
</reference>
<reference key="10">
    <citation type="journal article" date="2015" name="Cell Rep.">
        <title>PKA phosphorylation of NCLX reverses mitochondrial calcium overload and depolarization, promoting survival of PINK1-deficient dopaminergic neurons.</title>
        <authorList>
            <person name="Kostic M."/>
            <person name="Ludtmann M.H."/>
            <person name="Bading H."/>
            <person name="Hershfinkel M."/>
            <person name="Steer E."/>
            <person name="Chu C.T."/>
            <person name="Abramov A.Y."/>
            <person name="Sekler I."/>
        </authorList>
    </citation>
    <scope>PHOSPHORYLATION AT SER-258</scope>
    <scope>MUTAGENESIS OF SER-258</scope>
</reference>
<reference key="11">
    <citation type="journal article" date="2017" name="Biochim. Biophys. Acta">
        <title>Identification of residues that control Li+ versus Na+ dependent Ca2+ exchange at the transport site of the mitochondrial NCLX.</title>
        <authorList>
            <person name="Roy S."/>
            <person name="Dey K."/>
            <person name="Hershfinkel M."/>
            <person name="Ohana E."/>
            <person name="Sekler I."/>
        </authorList>
    </citation>
    <scope>FUNCTION</scope>
    <scope>TRANSPORTER ACTIVITY (ISOFORM 1)</scope>
    <scope>MUTAGENESIS OF ASN-149; PRO-152; ASP-153; GLY-176; ASN-467; SER-468; ASP-471; GLY-494 AND ASN-498</scope>
</reference>
<reference key="12">
    <citation type="journal article" date="2017" name="EMBO J.">
        <title>Mitochondria control store-operated Ca(2+) entry through Na(+) and redox signals.</title>
        <authorList>
            <person name="Ben-Kasus Nissim T."/>
            <person name="Zhang X."/>
            <person name="Elazar A."/>
            <person name="Roy S."/>
            <person name="Stolwijk J.A."/>
            <person name="Zhou Y."/>
            <person name="Motiani R.K."/>
            <person name="Gueguinou M."/>
            <person name="Hempel N."/>
            <person name="Hershfinkel M."/>
            <person name="Gill D.L."/>
            <person name="Trebak M."/>
            <person name="Sekler I."/>
        </authorList>
    </citation>
    <scope>FUNCTION</scope>
</reference>
<dbReference type="EMBL" id="AY601759">
    <property type="protein sequence ID" value="AAT35807.1"/>
    <property type="molecule type" value="mRNA"/>
</dbReference>
<dbReference type="EMBL" id="AY601760">
    <property type="protein sequence ID" value="AAT35808.1"/>
    <property type="molecule type" value="mRNA"/>
</dbReference>
<dbReference type="EMBL" id="AC010178">
    <property type="status" value="NOT_ANNOTATED_CDS"/>
    <property type="molecule type" value="Genomic_DNA"/>
</dbReference>
<dbReference type="EMBL" id="CH471054">
    <property type="protein sequence ID" value="EAW98050.1"/>
    <property type="molecule type" value="Genomic_DNA"/>
</dbReference>
<dbReference type="EMBL" id="BC098360">
    <property type="protein sequence ID" value="AAH98360.1"/>
    <property type="molecule type" value="mRNA"/>
</dbReference>
<dbReference type="EMBL" id="AK025886">
    <property type="protein sequence ID" value="BAB15271.1"/>
    <property type="status" value="ALT_INIT"/>
    <property type="molecule type" value="mRNA"/>
</dbReference>
<dbReference type="CCDS" id="CCDS31909.1">
    <molecule id="Q6J4K2-1"/>
</dbReference>
<dbReference type="CCDS" id="CCDS81744.1">
    <molecule id="Q6J4K2-2"/>
</dbReference>
<dbReference type="RefSeq" id="NP_001317395.1">
    <molecule id="Q6J4K2-2"/>
    <property type="nucleotide sequence ID" value="NM_001330466.2"/>
</dbReference>
<dbReference type="RefSeq" id="NP_001345274.1">
    <molecule id="Q6J4K2-1"/>
    <property type="nucleotide sequence ID" value="NM_001358345.2"/>
</dbReference>
<dbReference type="RefSeq" id="NP_079235.2">
    <molecule id="Q6J4K2-1"/>
    <property type="nucleotide sequence ID" value="NM_024959.3"/>
</dbReference>
<dbReference type="RefSeq" id="XP_006719670.1">
    <property type="nucleotide sequence ID" value="XM_006719607.2"/>
</dbReference>
<dbReference type="RefSeq" id="XP_011537051.1">
    <property type="nucleotide sequence ID" value="XM_011538749.2"/>
</dbReference>
<dbReference type="RefSeq" id="XP_011537054.1">
    <property type="nucleotide sequence ID" value="XM_011538752.2"/>
</dbReference>
<dbReference type="BioGRID" id="123078">
    <property type="interactions" value="4"/>
</dbReference>
<dbReference type="FunCoup" id="Q6J4K2">
    <property type="interactions" value="190"/>
</dbReference>
<dbReference type="IntAct" id="Q6J4K2">
    <property type="interactions" value="1"/>
</dbReference>
<dbReference type="STRING" id="9606.ENSP00000447091"/>
<dbReference type="BindingDB" id="Q6J4K2"/>
<dbReference type="ChEMBL" id="CHEMBL3763001"/>
<dbReference type="GuidetoPHARMACOLOGY" id="1050"/>
<dbReference type="TCDB" id="2.A.19.4.4">
    <property type="family name" value="the ca(2+):cation antiporter (caca) family"/>
</dbReference>
<dbReference type="GlyCosmos" id="Q6J4K2">
    <property type="glycosylation" value="1 site, No reported glycans"/>
</dbReference>
<dbReference type="GlyGen" id="Q6J4K2">
    <property type="glycosylation" value="2 sites, 2 N-linked glycans (2 sites)"/>
</dbReference>
<dbReference type="iPTMnet" id="Q6J4K2"/>
<dbReference type="PhosphoSitePlus" id="Q6J4K2"/>
<dbReference type="SwissPalm" id="Q6J4K2"/>
<dbReference type="BioMuta" id="SLC8B1"/>
<dbReference type="DMDM" id="85681048"/>
<dbReference type="jPOST" id="Q6J4K2"/>
<dbReference type="MassIVE" id="Q6J4K2"/>
<dbReference type="PaxDb" id="9606-ENSP00000447091"/>
<dbReference type="PeptideAtlas" id="Q6J4K2"/>
<dbReference type="ProteomicsDB" id="66508">
    <molecule id="Q6J4K2-1"/>
</dbReference>
<dbReference type="ProteomicsDB" id="66509">
    <molecule id="Q6J4K2-2"/>
</dbReference>
<dbReference type="Antibodypedia" id="31257">
    <property type="antibodies" value="92 antibodies from 26 providers"/>
</dbReference>
<dbReference type="DNASU" id="80024"/>
<dbReference type="Ensembl" id="ENST00000202831.7">
    <molecule id="Q6J4K2-1"/>
    <property type="protein sequence ID" value="ENSP00000202831.3"/>
    <property type="gene ID" value="ENSG00000089060.12"/>
</dbReference>
<dbReference type="Ensembl" id="ENST00000546737.5">
    <molecule id="Q6J4K2-2"/>
    <property type="protein sequence ID" value="ENSP00000450081.1"/>
    <property type="gene ID" value="ENSG00000089060.12"/>
</dbReference>
<dbReference type="Ensembl" id="ENST00000552014.5">
    <molecule id="Q6J4K2-1"/>
    <property type="protein sequence ID" value="ENSP00000447091.1"/>
    <property type="gene ID" value="ENSG00000089060.12"/>
</dbReference>
<dbReference type="Ensembl" id="ENST00000680972.1">
    <molecule id="Q6J4K2-1"/>
    <property type="protein sequence ID" value="ENSP00000506377.1"/>
    <property type="gene ID" value="ENSG00000089060.12"/>
</dbReference>
<dbReference type="GeneID" id="80024"/>
<dbReference type="KEGG" id="hsa:80024"/>
<dbReference type="MANE-Select" id="ENST00000680972.1">
    <property type="protein sequence ID" value="ENSP00000506377.1"/>
    <property type="RefSeq nucleotide sequence ID" value="NM_001358345.2"/>
    <property type="RefSeq protein sequence ID" value="NP_001345274.1"/>
</dbReference>
<dbReference type="UCSC" id="uc001tvc.4">
    <molecule id="Q6J4K2-1"/>
    <property type="organism name" value="human"/>
</dbReference>
<dbReference type="AGR" id="HGNC:26175"/>
<dbReference type="CTD" id="80024"/>
<dbReference type="DisGeNET" id="80024"/>
<dbReference type="GeneCards" id="SLC8B1"/>
<dbReference type="HGNC" id="HGNC:26175">
    <property type="gene designation" value="SLC8B1"/>
</dbReference>
<dbReference type="HPA" id="ENSG00000089060">
    <property type="expression patterns" value="Tissue enhanced (adrenal)"/>
</dbReference>
<dbReference type="MIM" id="609841">
    <property type="type" value="gene"/>
</dbReference>
<dbReference type="neXtProt" id="NX_Q6J4K2"/>
<dbReference type="OpenTargets" id="ENSG00000089060"/>
<dbReference type="PharmGKB" id="PA134954965"/>
<dbReference type="VEuPathDB" id="HostDB:ENSG00000089060"/>
<dbReference type="eggNOG" id="KOG2399">
    <property type="taxonomic scope" value="Eukaryota"/>
</dbReference>
<dbReference type="GeneTree" id="ENSGT00940000157433"/>
<dbReference type="HOGENOM" id="CLU_004979_3_2_1"/>
<dbReference type="InParanoid" id="Q6J4K2"/>
<dbReference type="OMA" id="VKQPIDM"/>
<dbReference type="OrthoDB" id="407410at2759"/>
<dbReference type="PAN-GO" id="Q6J4K2">
    <property type="GO annotations" value="4 GO annotations based on evolutionary models"/>
</dbReference>
<dbReference type="PhylomeDB" id="Q6J4K2"/>
<dbReference type="TreeFam" id="TF323444"/>
<dbReference type="PathwayCommons" id="Q6J4K2"/>
<dbReference type="Reactome" id="R-HSA-425561">
    <property type="pathway name" value="Sodium/Calcium exchangers"/>
</dbReference>
<dbReference type="Reactome" id="R-HSA-8949215">
    <property type="pathway name" value="Mitochondrial calcium ion transport"/>
</dbReference>
<dbReference type="SignaLink" id="Q6J4K2"/>
<dbReference type="SIGNOR" id="Q6J4K2"/>
<dbReference type="BioGRID-ORCS" id="80024">
    <property type="hits" value="14 hits in 1142 CRISPR screens"/>
</dbReference>
<dbReference type="ChiTaRS" id="SLC8B1">
    <property type="organism name" value="human"/>
</dbReference>
<dbReference type="GenomeRNAi" id="80024"/>
<dbReference type="Pharos" id="Q6J4K2">
    <property type="development level" value="Tbio"/>
</dbReference>
<dbReference type="PRO" id="PR:Q6J4K2"/>
<dbReference type="Proteomes" id="UP000005640">
    <property type="component" value="Chromosome 12"/>
</dbReference>
<dbReference type="RNAct" id="Q6J4K2">
    <property type="molecule type" value="protein"/>
</dbReference>
<dbReference type="Bgee" id="ENSG00000089060">
    <property type="expression patterns" value="Expressed in left adrenal gland cortex and 155 other cell types or tissues"/>
</dbReference>
<dbReference type="ExpressionAtlas" id="Q6J4K2">
    <property type="expression patterns" value="baseline and differential"/>
</dbReference>
<dbReference type="GO" id="GO:0016020">
    <property type="term" value="C:membrane"/>
    <property type="evidence" value="ECO:0000318"/>
    <property type="project" value="GO_Central"/>
</dbReference>
<dbReference type="GO" id="GO:0030061">
    <property type="term" value="C:mitochondrial crista"/>
    <property type="evidence" value="ECO:0000314"/>
    <property type="project" value="BHF-UCL"/>
</dbReference>
<dbReference type="GO" id="GO:0005743">
    <property type="term" value="C:mitochondrial inner membrane"/>
    <property type="evidence" value="ECO:0000304"/>
    <property type="project" value="Reactome"/>
</dbReference>
<dbReference type="GO" id="GO:0031966">
    <property type="term" value="C:mitochondrial membrane"/>
    <property type="evidence" value="ECO:0000314"/>
    <property type="project" value="UniProtKB"/>
</dbReference>
<dbReference type="GO" id="GO:0005739">
    <property type="term" value="C:mitochondrion"/>
    <property type="evidence" value="ECO:0006056"/>
    <property type="project" value="FlyBase"/>
</dbReference>
<dbReference type="GO" id="GO:0005886">
    <property type="term" value="C:plasma membrane"/>
    <property type="evidence" value="ECO:0000304"/>
    <property type="project" value="Reactome"/>
</dbReference>
<dbReference type="GO" id="GO:0042383">
    <property type="term" value="C:sarcolemma"/>
    <property type="evidence" value="ECO:0007669"/>
    <property type="project" value="Ensembl"/>
</dbReference>
<dbReference type="GO" id="GO:0015368">
    <property type="term" value="F:calcium:monoatomic cation antiporter activity"/>
    <property type="evidence" value="ECO:0000304"/>
    <property type="project" value="Reactome"/>
</dbReference>
<dbReference type="GO" id="GO:0005432">
    <property type="term" value="F:calcium:sodium antiporter activity"/>
    <property type="evidence" value="ECO:0000314"/>
    <property type="project" value="UniProtKB"/>
</dbReference>
<dbReference type="GO" id="GO:0086038">
    <property type="term" value="F:calcium:sodium antiporter activity involved in regulation of cardiac muscle cell membrane potential"/>
    <property type="evidence" value="ECO:0000250"/>
    <property type="project" value="UniProtKB"/>
</dbReference>
<dbReference type="GO" id="GO:0042803">
    <property type="term" value="F:protein homodimerization activity"/>
    <property type="evidence" value="ECO:0000353"/>
    <property type="project" value="BHF-UCL"/>
</dbReference>
<dbReference type="GO" id="GO:0099093">
    <property type="term" value="P:calcium export from the mitochondrion"/>
    <property type="evidence" value="ECO:0000314"/>
    <property type="project" value="UniProtKB"/>
</dbReference>
<dbReference type="GO" id="GO:0042593">
    <property type="term" value="P:glucose homeostasis"/>
    <property type="evidence" value="ECO:0000314"/>
    <property type="project" value="UniProtKB"/>
</dbReference>
<dbReference type="GO" id="GO:0006874">
    <property type="term" value="P:intracellular calcium ion homeostasis"/>
    <property type="evidence" value="ECO:0000318"/>
    <property type="project" value="GO_Central"/>
</dbReference>
<dbReference type="GO" id="GO:0051560">
    <property type="term" value="P:mitochondrial calcium ion homeostasis"/>
    <property type="evidence" value="ECO:0000314"/>
    <property type="project" value="UniProtKB"/>
</dbReference>
<dbReference type="GO" id="GO:0006851">
    <property type="term" value="P:mitochondrial calcium ion transmembrane transport"/>
    <property type="evidence" value="ECO:0000314"/>
    <property type="project" value="UniProtKB"/>
</dbReference>
<dbReference type="GO" id="GO:0006811">
    <property type="term" value="P:monoatomic ion transport"/>
    <property type="evidence" value="ECO:0000304"/>
    <property type="project" value="Reactome"/>
</dbReference>
<dbReference type="GO" id="GO:0086036">
    <property type="term" value="P:regulation of cardiac muscle cell membrane potential"/>
    <property type="evidence" value="ECO:0000315"/>
    <property type="project" value="BHF-UCL"/>
</dbReference>
<dbReference type="GO" id="GO:0051480">
    <property type="term" value="P:regulation of cytosolic calcium ion concentration"/>
    <property type="evidence" value="ECO:0000315"/>
    <property type="project" value="BHF-UCL"/>
</dbReference>
<dbReference type="GO" id="GO:0050796">
    <property type="term" value="P:regulation of insulin secretion"/>
    <property type="evidence" value="ECO:0000314"/>
    <property type="project" value="UniProtKB"/>
</dbReference>
<dbReference type="GO" id="GO:1901623">
    <property type="term" value="P:regulation of lymphocyte chemotaxis"/>
    <property type="evidence" value="ECO:0000250"/>
    <property type="project" value="UniProtKB"/>
</dbReference>
<dbReference type="GO" id="GO:2001256">
    <property type="term" value="P:regulation of store-operated calcium entry"/>
    <property type="evidence" value="ECO:0000314"/>
    <property type="project" value="UniProtKB"/>
</dbReference>
<dbReference type="FunFam" id="1.20.1420.30:FF:000023">
    <property type="entry name" value="Mitochondrial sodium/calcium exchanger protein"/>
    <property type="match status" value="1"/>
</dbReference>
<dbReference type="FunFam" id="1.20.1420.30:FF:000025">
    <property type="entry name" value="sodium/potassium/calcium exchanger 6, mitochondrial isoform X3"/>
    <property type="match status" value="1"/>
</dbReference>
<dbReference type="Gene3D" id="1.20.1420.30">
    <property type="entry name" value="NCX, central ion-binding region"/>
    <property type="match status" value="2"/>
</dbReference>
<dbReference type="InterPro" id="IPR051359">
    <property type="entry name" value="CaCA_antiporter"/>
</dbReference>
<dbReference type="InterPro" id="IPR004837">
    <property type="entry name" value="NaCa_Exmemb"/>
</dbReference>
<dbReference type="InterPro" id="IPR044880">
    <property type="entry name" value="NCX_ion-bd_dom_sf"/>
</dbReference>
<dbReference type="PANTHER" id="PTHR12266:SF0">
    <property type="entry name" value="MITOCHONDRIAL SODIUM_CALCIUM EXCHANGER PROTEIN"/>
    <property type="match status" value="1"/>
</dbReference>
<dbReference type="PANTHER" id="PTHR12266">
    <property type="entry name" value="NA+/CA2+ K+ INDEPENDENT EXCHANGER"/>
    <property type="match status" value="1"/>
</dbReference>
<dbReference type="Pfam" id="PF01699">
    <property type="entry name" value="Na_Ca_ex"/>
    <property type="match status" value="2"/>
</dbReference>
<accession>Q6J4K2</accession>
<accession>A6NP50</accession>
<accession>Q4KMS9</accession>
<accession>Q6J4K1</accession>
<accession>Q9H6I8</accession>
<proteinExistence type="evidence at protein level"/>
<protein>
    <recommendedName>
        <fullName evidence="12">Mitochondrial sodium/calcium exchanger protein</fullName>
    </recommendedName>
    <alternativeName>
        <fullName evidence="1">Na(+)/K(+)/Ca(2+)-exchange protein 6</fullName>
    </alternativeName>
    <alternativeName>
        <fullName evidence="11">Sodium/calcium exchanger protein, mitochondrial</fullName>
    </alternativeName>
    <alternativeName>
        <fullName evidence="1">Sodium/potassium/calcium exchanger 6</fullName>
    </alternativeName>
    <alternativeName>
        <fullName evidence="15">Solute carrier family 24 member 6</fullName>
    </alternativeName>
    <alternativeName>
        <fullName evidence="15">Solute carrier family 8 member B1</fullName>
    </alternativeName>
</protein>